<name>DCTD_PONAB</name>
<sequence length="178" mass="20045">MSEVSCKKRDDYLEWPEYFMAVAFLSAQRSKDPNSQVGACIVNSENKIVGIGYNGMPNGCSDDQLPWRRTAKNKLDTKYPYVCHAELNAIMNKNSTDVKGCSMYVALFPCNECAKLIIQAGIKEVIFMSDKYHDSDEATAARLLFDMAGVTFRKFIPKCSKIVIDFDSINSRPSQKLQ</sequence>
<protein>
    <recommendedName>
        <fullName evidence="1">Deoxycytidylate deaminase</fullName>
        <ecNumber evidence="1">3.5.4.12</ecNumber>
    </recommendedName>
    <alternativeName>
        <fullName evidence="1">dCMP deaminase</fullName>
    </alternativeName>
</protein>
<gene>
    <name evidence="1" type="primary">DCTD</name>
</gene>
<evidence type="ECO:0000250" key="1">
    <source>
        <dbReference type="UniProtKB" id="P32321"/>
    </source>
</evidence>
<evidence type="ECO:0000255" key="2">
    <source>
        <dbReference type="PROSITE-ProRule" id="PRU01083"/>
    </source>
</evidence>
<evidence type="ECO:0000305" key="3"/>
<organism>
    <name type="scientific">Pongo abelii</name>
    <name type="common">Sumatran orangutan</name>
    <name type="synonym">Pongo pygmaeus abelii</name>
    <dbReference type="NCBI Taxonomy" id="9601"/>
    <lineage>
        <taxon>Eukaryota</taxon>
        <taxon>Metazoa</taxon>
        <taxon>Chordata</taxon>
        <taxon>Craniata</taxon>
        <taxon>Vertebrata</taxon>
        <taxon>Euteleostomi</taxon>
        <taxon>Mammalia</taxon>
        <taxon>Eutheria</taxon>
        <taxon>Euarchontoglires</taxon>
        <taxon>Primates</taxon>
        <taxon>Haplorrhini</taxon>
        <taxon>Catarrhini</taxon>
        <taxon>Hominidae</taxon>
        <taxon>Pongo</taxon>
    </lineage>
</organism>
<feature type="chain" id="PRO_0000171693" description="Deoxycytidylate deaminase">
    <location>
        <begin position="1"/>
        <end position="178"/>
    </location>
</feature>
<feature type="domain" description="CMP/dCMP-type deaminase" evidence="2">
    <location>
        <begin position="14"/>
        <end position="146"/>
    </location>
</feature>
<feature type="active site" description="Proton donor" evidence="2">
    <location>
        <position position="86"/>
    </location>
</feature>
<feature type="binding site" evidence="1">
    <location>
        <position position="84"/>
    </location>
    <ligand>
        <name>Zn(2+)</name>
        <dbReference type="ChEBI" id="CHEBI:29105"/>
        <note>catalytic</note>
    </ligand>
</feature>
<feature type="binding site" evidence="1">
    <location>
        <position position="110"/>
    </location>
    <ligand>
        <name>Zn(2+)</name>
        <dbReference type="ChEBI" id="CHEBI:29105"/>
        <note>catalytic</note>
    </ligand>
</feature>
<feature type="binding site" evidence="1">
    <location>
        <position position="113"/>
    </location>
    <ligand>
        <name>Zn(2+)</name>
        <dbReference type="ChEBI" id="CHEBI:29105"/>
        <note>catalytic</note>
    </ligand>
</feature>
<feature type="modified residue" description="Phosphoserine" evidence="1">
    <location>
        <position position="174"/>
    </location>
</feature>
<dbReference type="EC" id="3.5.4.12" evidence="1"/>
<dbReference type="EMBL" id="CR858411">
    <property type="protein sequence ID" value="CAH90638.1"/>
    <property type="molecule type" value="mRNA"/>
</dbReference>
<dbReference type="RefSeq" id="XP_009238756.1">
    <property type="nucleotide sequence ID" value="XM_009240481.4"/>
</dbReference>
<dbReference type="RefSeq" id="XP_024101655.1">
    <property type="nucleotide sequence ID" value="XM_024245887.3"/>
</dbReference>
<dbReference type="RefSeq" id="XP_024101656.1">
    <property type="nucleotide sequence ID" value="XM_024245888.3"/>
</dbReference>
<dbReference type="RefSeq" id="XP_054410759.1">
    <property type="nucleotide sequence ID" value="XM_054554784.2"/>
</dbReference>
<dbReference type="RefSeq" id="XP_063579812.1">
    <property type="nucleotide sequence ID" value="XM_063723742.1"/>
</dbReference>
<dbReference type="SMR" id="Q5RC69"/>
<dbReference type="FunCoup" id="Q5RC69">
    <property type="interactions" value="1012"/>
</dbReference>
<dbReference type="STRING" id="9601.ENSPPYP00000017005"/>
<dbReference type="Ensembl" id="ENSPPYT00000017695.3">
    <property type="protein sequence ID" value="ENSPPYP00000017005.2"/>
    <property type="gene ID" value="ENSPPYG00000015223.3"/>
</dbReference>
<dbReference type="GeneID" id="100457791"/>
<dbReference type="KEGG" id="pon:100457791"/>
<dbReference type="CTD" id="1635"/>
<dbReference type="eggNOG" id="KOG3127">
    <property type="taxonomic scope" value="Eukaryota"/>
</dbReference>
<dbReference type="GeneTree" id="ENSGT00940000153676"/>
<dbReference type="HOGENOM" id="CLU_047993_1_1_1"/>
<dbReference type="InParanoid" id="Q5RC69"/>
<dbReference type="OMA" id="PEYFMAI"/>
<dbReference type="OrthoDB" id="6710946at2759"/>
<dbReference type="TreeFam" id="TF105971"/>
<dbReference type="Proteomes" id="UP000001595">
    <property type="component" value="Chromosome 4"/>
</dbReference>
<dbReference type="GO" id="GO:0005737">
    <property type="term" value="C:cytoplasm"/>
    <property type="evidence" value="ECO:0007669"/>
    <property type="project" value="TreeGrafter"/>
</dbReference>
<dbReference type="GO" id="GO:0070694">
    <property type="term" value="F:5-hydroxymethyl-dUMP N-hydrolase activity"/>
    <property type="evidence" value="ECO:0000250"/>
    <property type="project" value="UniProtKB"/>
</dbReference>
<dbReference type="GO" id="GO:0004132">
    <property type="term" value="F:dCMP deaminase activity"/>
    <property type="evidence" value="ECO:0007669"/>
    <property type="project" value="UniProtKB-EC"/>
</dbReference>
<dbReference type="GO" id="GO:0008270">
    <property type="term" value="F:zinc ion binding"/>
    <property type="evidence" value="ECO:0007669"/>
    <property type="project" value="InterPro"/>
</dbReference>
<dbReference type="GO" id="GO:0009972">
    <property type="term" value="P:cytidine deamination"/>
    <property type="evidence" value="ECO:0007669"/>
    <property type="project" value="TreeGrafter"/>
</dbReference>
<dbReference type="GO" id="GO:0043174">
    <property type="term" value="P:nucleoside salvage"/>
    <property type="evidence" value="ECO:0000250"/>
    <property type="project" value="UniProtKB"/>
</dbReference>
<dbReference type="GO" id="GO:0009165">
    <property type="term" value="P:nucleotide biosynthetic process"/>
    <property type="evidence" value="ECO:0007669"/>
    <property type="project" value="UniProtKB-KW"/>
</dbReference>
<dbReference type="GO" id="GO:0006220">
    <property type="term" value="P:pyrimidine nucleotide metabolic process"/>
    <property type="evidence" value="ECO:0007669"/>
    <property type="project" value="InterPro"/>
</dbReference>
<dbReference type="CDD" id="cd01286">
    <property type="entry name" value="deoxycytidylate_deaminase"/>
    <property type="match status" value="1"/>
</dbReference>
<dbReference type="FunFam" id="3.40.140.10:FF:000021">
    <property type="entry name" value="Deoxycytidylate deaminase"/>
    <property type="match status" value="1"/>
</dbReference>
<dbReference type="Gene3D" id="3.40.140.10">
    <property type="entry name" value="Cytidine Deaminase, domain 2"/>
    <property type="match status" value="1"/>
</dbReference>
<dbReference type="InterPro" id="IPR016192">
    <property type="entry name" value="APOBEC/CMP_deaminase_Zn-bd"/>
</dbReference>
<dbReference type="InterPro" id="IPR002125">
    <property type="entry name" value="CMP_dCMP_dom"/>
</dbReference>
<dbReference type="InterPro" id="IPR016193">
    <property type="entry name" value="Cytidine_deaminase-like"/>
</dbReference>
<dbReference type="InterPro" id="IPR016473">
    <property type="entry name" value="dCMP_deaminase"/>
</dbReference>
<dbReference type="InterPro" id="IPR015517">
    <property type="entry name" value="dCMP_deaminase-rel"/>
</dbReference>
<dbReference type="InterPro" id="IPR035105">
    <property type="entry name" value="Deoxycytidylate_deaminase_dom"/>
</dbReference>
<dbReference type="PANTHER" id="PTHR11086:SF18">
    <property type="entry name" value="DEOXYCYTIDYLATE DEAMINASE"/>
    <property type="match status" value="1"/>
</dbReference>
<dbReference type="PANTHER" id="PTHR11086">
    <property type="entry name" value="DEOXYCYTIDYLATE DEAMINASE-RELATED"/>
    <property type="match status" value="1"/>
</dbReference>
<dbReference type="Pfam" id="PF00383">
    <property type="entry name" value="dCMP_cyt_deam_1"/>
    <property type="match status" value="1"/>
</dbReference>
<dbReference type="PIRSF" id="PIRSF006019">
    <property type="entry name" value="dCMP_deaminase"/>
    <property type="match status" value="1"/>
</dbReference>
<dbReference type="SUPFAM" id="SSF53927">
    <property type="entry name" value="Cytidine deaminase-like"/>
    <property type="match status" value="1"/>
</dbReference>
<dbReference type="PROSITE" id="PS00903">
    <property type="entry name" value="CYT_DCMP_DEAMINASES_1"/>
    <property type="match status" value="1"/>
</dbReference>
<dbReference type="PROSITE" id="PS51747">
    <property type="entry name" value="CYT_DCMP_DEAMINASES_2"/>
    <property type="match status" value="1"/>
</dbReference>
<proteinExistence type="evidence at transcript level"/>
<accession>Q5RC69</accession>
<comment type="function">
    <text evidence="1">Catalyzes the deamination of dCMP to dUMP, providing the nucleoside monophosphate substrate for the thymidylate synthase/TYMS. Also, part of a nucleotide salvage pathway that eliminates epigenetically modified 5-hydroxymethyl-dCMP (hmdCMP) in a two-step process entailing deamination to cytotoxic 5-hydroxymethyl-dUMP (hmdUMP), followed by its hydrolysis into 5-hydroxymethyluracil (hmU) and 2-deoxy-D-ribose 5-phosphate (deoxyribosephosphate). Catalyzes the first step in that pathway, the deamination of 5-hydroxymethyl-dCMP (hmdCMP).</text>
</comment>
<comment type="catalytic activity">
    <reaction evidence="1">
        <text>dCMP + H2O + H(+) = dUMP + NH4(+)</text>
        <dbReference type="Rhea" id="RHEA:22924"/>
        <dbReference type="ChEBI" id="CHEBI:15377"/>
        <dbReference type="ChEBI" id="CHEBI:15378"/>
        <dbReference type="ChEBI" id="CHEBI:28938"/>
        <dbReference type="ChEBI" id="CHEBI:57566"/>
        <dbReference type="ChEBI" id="CHEBI:246422"/>
        <dbReference type="EC" id="3.5.4.12"/>
    </reaction>
    <physiologicalReaction direction="left-to-right" evidence="1">
        <dbReference type="Rhea" id="RHEA:22925"/>
    </physiologicalReaction>
</comment>
<comment type="catalytic activity">
    <reaction evidence="1">
        <text>5-hydroxymethyl-dCMP + H2O + H(+) = 5-hydroxymethyl-dUMP + NH4(+)</text>
        <dbReference type="Rhea" id="RHEA:77175"/>
        <dbReference type="ChEBI" id="CHEBI:15377"/>
        <dbReference type="ChEBI" id="CHEBI:15378"/>
        <dbReference type="ChEBI" id="CHEBI:28938"/>
        <dbReference type="ChEBI" id="CHEBI:57962"/>
        <dbReference type="ChEBI" id="CHEBI:90409"/>
    </reaction>
    <physiologicalReaction direction="left-to-right" evidence="1">
        <dbReference type="Rhea" id="RHEA:77176"/>
    </physiologicalReaction>
</comment>
<comment type="cofactor">
    <cofactor evidence="1">
        <name>Zn(2+)</name>
        <dbReference type="ChEBI" id="CHEBI:29105"/>
    </cofactor>
</comment>
<comment type="activity regulation">
    <text evidence="1">Allosteric enzyme whose activity is greatly influenced by the end products of its metabolic pathway, dCTP and dTTP.</text>
</comment>
<comment type="subunit">
    <text evidence="1">Homohexamer.</text>
</comment>
<comment type="similarity">
    <text evidence="3">Belongs to the cytidine and deoxycytidylate deaminase family.</text>
</comment>
<keyword id="KW-0021">Allosteric enzyme</keyword>
<keyword id="KW-0378">Hydrolase</keyword>
<keyword id="KW-0479">Metal-binding</keyword>
<keyword id="KW-0545">Nucleotide biosynthesis</keyword>
<keyword id="KW-0597">Phosphoprotein</keyword>
<keyword id="KW-1185">Reference proteome</keyword>
<keyword id="KW-0862">Zinc</keyword>
<reference key="1">
    <citation type="submission" date="2004-11" db="EMBL/GenBank/DDBJ databases">
        <authorList>
            <consortium name="The German cDNA consortium"/>
        </authorList>
    </citation>
    <scope>NUCLEOTIDE SEQUENCE [LARGE SCALE MRNA]</scope>
    <source>
        <tissue>Brain cortex</tissue>
    </source>
</reference>